<dbReference type="EC" id="2.2.1.1"/>
<dbReference type="EMBL" id="Z46646">
    <property type="protein sequence ID" value="CAA86607.1"/>
    <property type="molecule type" value="mRNA"/>
</dbReference>
<dbReference type="PIR" id="S54300">
    <property type="entry name" value="S54300"/>
</dbReference>
<dbReference type="SMR" id="Q42676"/>
<dbReference type="GO" id="GO:0009507">
    <property type="term" value="C:chloroplast"/>
    <property type="evidence" value="ECO:0007669"/>
    <property type="project" value="UniProtKB-SubCell"/>
</dbReference>
<dbReference type="GO" id="GO:0005829">
    <property type="term" value="C:cytosol"/>
    <property type="evidence" value="ECO:0007669"/>
    <property type="project" value="TreeGrafter"/>
</dbReference>
<dbReference type="GO" id="GO:0046872">
    <property type="term" value="F:metal ion binding"/>
    <property type="evidence" value="ECO:0007669"/>
    <property type="project" value="UniProtKB-KW"/>
</dbReference>
<dbReference type="GO" id="GO:0004802">
    <property type="term" value="F:transketolase activity"/>
    <property type="evidence" value="ECO:0007669"/>
    <property type="project" value="UniProtKB-EC"/>
</dbReference>
<dbReference type="GO" id="GO:0006098">
    <property type="term" value="P:pentose-phosphate shunt"/>
    <property type="evidence" value="ECO:0007669"/>
    <property type="project" value="TreeGrafter"/>
</dbReference>
<dbReference type="CDD" id="cd07033">
    <property type="entry name" value="TPP_PYR_DXS_TK_like"/>
    <property type="match status" value="1"/>
</dbReference>
<dbReference type="FunFam" id="3.40.50.920:FF:000003">
    <property type="entry name" value="Transketolase"/>
    <property type="match status" value="1"/>
</dbReference>
<dbReference type="FunFam" id="3.40.50.970:FF:000003">
    <property type="entry name" value="Transketolase"/>
    <property type="match status" value="1"/>
</dbReference>
<dbReference type="Gene3D" id="3.40.50.920">
    <property type="match status" value="1"/>
</dbReference>
<dbReference type="Gene3D" id="3.40.50.970">
    <property type="match status" value="2"/>
</dbReference>
<dbReference type="InterPro" id="IPR029061">
    <property type="entry name" value="THDP-binding"/>
</dbReference>
<dbReference type="InterPro" id="IPR009014">
    <property type="entry name" value="Transketo_C/PFOR_II"/>
</dbReference>
<dbReference type="InterPro" id="IPR055152">
    <property type="entry name" value="Transketolase-like_C_2"/>
</dbReference>
<dbReference type="InterPro" id="IPR005475">
    <property type="entry name" value="Transketolase-like_Pyr-bd"/>
</dbReference>
<dbReference type="InterPro" id="IPR005478">
    <property type="entry name" value="Transketolase_bac-like"/>
</dbReference>
<dbReference type="InterPro" id="IPR020826">
    <property type="entry name" value="Transketolase_BS"/>
</dbReference>
<dbReference type="InterPro" id="IPR033247">
    <property type="entry name" value="Transketolase_fam"/>
</dbReference>
<dbReference type="InterPro" id="IPR005474">
    <property type="entry name" value="Transketolase_N"/>
</dbReference>
<dbReference type="NCBIfam" id="TIGR00232">
    <property type="entry name" value="tktlase_bact"/>
    <property type="match status" value="1"/>
</dbReference>
<dbReference type="PANTHER" id="PTHR43522">
    <property type="entry name" value="TRANSKETOLASE"/>
    <property type="match status" value="1"/>
</dbReference>
<dbReference type="PANTHER" id="PTHR43522:SF17">
    <property type="entry name" value="TRANSKETOLASE, CHLOROPLASTIC"/>
    <property type="match status" value="1"/>
</dbReference>
<dbReference type="Pfam" id="PF02779">
    <property type="entry name" value="Transket_pyr"/>
    <property type="match status" value="1"/>
</dbReference>
<dbReference type="Pfam" id="PF22613">
    <property type="entry name" value="Transketolase_C_1"/>
    <property type="match status" value="1"/>
</dbReference>
<dbReference type="Pfam" id="PF00456">
    <property type="entry name" value="Transketolase_N"/>
    <property type="match status" value="1"/>
</dbReference>
<dbReference type="SMART" id="SM00861">
    <property type="entry name" value="Transket_pyr"/>
    <property type="match status" value="1"/>
</dbReference>
<dbReference type="SUPFAM" id="SSF52518">
    <property type="entry name" value="Thiamin diphosphate-binding fold (THDP-binding)"/>
    <property type="match status" value="2"/>
</dbReference>
<dbReference type="SUPFAM" id="SSF52922">
    <property type="entry name" value="TK C-terminal domain-like"/>
    <property type="match status" value="1"/>
</dbReference>
<dbReference type="PROSITE" id="PS00802">
    <property type="entry name" value="TRANSKETOLASE_2"/>
    <property type="match status" value="1"/>
</dbReference>
<feature type="chain" id="PRO_0000191906" description="Transketolase, chloroplastic">
    <location>
        <begin position="1" status="less than"/>
        <end position="519"/>
    </location>
</feature>
<feature type="active site" description="Proton donor" evidence="1">
    <location>
        <position position="266"/>
    </location>
</feature>
<feature type="binding site" evidence="1">
    <location>
        <position position="11"/>
    </location>
    <ligand>
        <name>Mg(2+)</name>
        <dbReference type="ChEBI" id="CHEBI:18420"/>
    </ligand>
</feature>
<feature type="binding site" evidence="1">
    <location>
        <position position="12"/>
    </location>
    <ligand>
        <name>thiamine diphosphate</name>
        <dbReference type="ChEBI" id="CHEBI:58937"/>
    </ligand>
</feature>
<feature type="binding site" evidence="1">
    <location>
        <position position="41"/>
    </location>
    <ligand>
        <name>Mg(2+)</name>
        <dbReference type="ChEBI" id="CHEBI:18420"/>
    </ligand>
</feature>
<feature type="binding site" evidence="1">
    <location>
        <position position="41"/>
    </location>
    <ligand>
        <name>thiamine diphosphate</name>
        <dbReference type="ChEBI" id="CHEBI:58937"/>
    </ligand>
</feature>
<feature type="binding site" evidence="1">
    <location>
        <position position="43"/>
    </location>
    <ligand>
        <name>Mg(2+)</name>
        <dbReference type="ChEBI" id="CHEBI:18420"/>
    </ligand>
</feature>
<feature type="binding site" evidence="1">
    <location>
        <position position="118"/>
    </location>
    <ligand>
        <name>substrate</name>
    </ligand>
</feature>
<feature type="binding site" evidence="1">
    <location>
        <position position="118"/>
    </location>
    <ligand>
        <name>thiamine diphosphate</name>
        <dbReference type="ChEBI" id="CHEBI:58937"/>
    </ligand>
</feature>
<feature type="binding site" evidence="1">
    <location>
        <position position="212"/>
    </location>
    <ligand>
        <name>substrate</name>
    </ligand>
</feature>
<feature type="binding site" evidence="1">
    <location>
        <position position="239"/>
    </location>
    <ligand>
        <name>substrate</name>
    </ligand>
</feature>
<feature type="binding site" evidence="1">
    <location>
        <position position="266"/>
    </location>
    <ligand>
        <name>thiamine diphosphate</name>
        <dbReference type="ChEBI" id="CHEBI:58937"/>
    </ligand>
</feature>
<feature type="binding site" evidence="1">
    <location>
        <position position="293"/>
    </location>
    <ligand>
        <name>thiamine diphosphate</name>
        <dbReference type="ChEBI" id="CHEBI:58937"/>
    </ligand>
</feature>
<feature type="binding site" evidence="1">
    <location>
        <position position="317"/>
    </location>
    <ligand>
        <name>substrate</name>
    </ligand>
</feature>
<feature type="binding site" evidence="1">
    <location>
        <position position="325"/>
    </location>
    <ligand>
        <name>substrate</name>
    </ligand>
</feature>
<feature type="binding site" evidence="1">
    <location>
        <position position="376"/>
    </location>
    <ligand>
        <name>substrate</name>
    </ligand>
</feature>
<feature type="site" description="Important for catalytic activity" evidence="1">
    <location>
        <position position="118"/>
    </location>
</feature>
<feature type="non-terminal residue">
    <location>
        <position position="1"/>
    </location>
</feature>
<proteinExistence type="evidence at protein level"/>
<name>TKTC_CRAPL</name>
<protein>
    <recommendedName>
        <fullName>Transketolase, chloroplastic</fullName>
        <shortName>TK</shortName>
        <ecNumber>2.2.1.1</ecNumber>
    </recommendedName>
</protein>
<comment type="function">
    <text evidence="1">Catalyzes the transfer of a two-carbon ketol group from a ketose donor to an aldose acceptor, via a covalent intermediate with the cofactor thiamine pyrophosphate.</text>
</comment>
<comment type="catalytic activity">
    <reaction>
        <text>D-sedoheptulose 7-phosphate + D-glyceraldehyde 3-phosphate = aldehydo-D-ribose 5-phosphate + D-xylulose 5-phosphate</text>
        <dbReference type="Rhea" id="RHEA:10508"/>
        <dbReference type="ChEBI" id="CHEBI:57483"/>
        <dbReference type="ChEBI" id="CHEBI:57737"/>
        <dbReference type="ChEBI" id="CHEBI:58273"/>
        <dbReference type="ChEBI" id="CHEBI:59776"/>
        <dbReference type="EC" id="2.2.1.1"/>
    </reaction>
</comment>
<comment type="cofactor">
    <cofactor evidence="1">
        <name>Mg(2+)</name>
        <dbReference type="ChEBI" id="CHEBI:18420"/>
    </cofactor>
    <cofactor evidence="1">
        <name>Ca(2+)</name>
        <dbReference type="ChEBI" id="CHEBI:29108"/>
    </cofactor>
    <cofactor evidence="1">
        <name>Mn(2+)</name>
        <dbReference type="ChEBI" id="CHEBI:29035"/>
    </cofactor>
    <cofactor evidence="1">
        <name>Co(2+)</name>
        <dbReference type="ChEBI" id="CHEBI:48828"/>
    </cofactor>
    <text evidence="1">Binds 1 Mg(2+) ion per subunit. Can also utilize other divalent metal cations, such as Ca(2+), Mn(2+) and Co(2+).</text>
</comment>
<comment type="cofactor">
    <cofactor evidence="1">
        <name>thiamine diphosphate</name>
        <dbReference type="ChEBI" id="CHEBI:58937"/>
    </cofactor>
    <text evidence="1">Binds 1 thiamine pyrophosphate per subunit.</text>
</comment>
<comment type="subunit">
    <text>Homodimer.</text>
</comment>
<comment type="subcellular location">
    <subcellularLocation>
        <location evidence="2">Plastid</location>
        <location evidence="2">Chloroplast</location>
    </subcellularLocation>
</comment>
<comment type="tissue specificity">
    <text>Constitutively expressed in leaves and roots.</text>
</comment>
<comment type="similarity">
    <text evidence="2">Belongs to the transketolase family.</text>
</comment>
<gene>
    <name type="primary">TKT3</name>
</gene>
<keyword id="KW-0106">Calcium</keyword>
<keyword id="KW-0150">Chloroplast</keyword>
<keyword id="KW-0903">Direct protein sequencing</keyword>
<keyword id="KW-0460">Magnesium</keyword>
<keyword id="KW-0479">Metal-binding</keyword>
<keyword id="KW-0934">Plastid</keyword>
<keyword id="KW-0786">Thiamine pyrophosphate</keyword>
<keyword id="KW-0808">Transferase</keyword>
<sequence length="519" mass="56188">VDHYTYCILGDGCQMEGVSNEACSIAAHWGLGKLIALYDDNHISIDGDTDIAFTEDVDKRFEALGWHVIWVKNGNNGYDKIRAAIKEAQAVKDKPTMIKITTTIGFGSPNKSNSYSVHGSALGAKEVEATRQNLGWPYEPFHVPDDVKKHWSRHTPQGASLESEWNAKFAEYEKKYPEEAAELKSIITGELPLGWEKALPTYTPENPGDATRNLSQQNLNALAKVLPGLLGGSADLASSNMTLLKSSGDFQKNTPEERNVRFGVREHGMGAICNGIALHSPGLIPYCATFFVFTDYMRAAMRISALCEARVIYVMTHDSIGLGEDGPTHQPIEHLASFRAMPNILMLRPADGNETAGAYKVAVQNLKRPSVLALSRQKLPQLPGTSIEGVEKGGYVISDNSSGNKPDVILIGTGSELEIAAKAGEVLRKEGKGVRVVSFVSWELFDEQSKEYKESVLPSSVTARVSIEAGSTFGWGKIVGSKGKAIGIDRFGASAPAGKIYEEFGITVEAVVAAAKELI</sequence>
<organism>
    <name type="scientific">Craterostigma plantagineum</name>
    <name type="common">Blue gem</name>
    <name type="synonym">Torenia plantagineum</name>
    <dbReference type="NCBI Taxonomy" id="4153"/>
    <lineage>
        <taxon>Eukaryota</taxon>
        <taxon>Viridiplantae</taxon>
        <taxon>Streptophyta</taxon>
        <taxon>Embryophyta</taxon>
        <taxon>Tracheophyta</taxon>
        <taxon>Spermatophyta</taxon>
        <taxon>Magnoliopsida</taxon>
        <taxon>eudicotyledons</taxon>
        <taxon>Gunneridae</taxon>
        <taxon>Pentapetalae</taxon>
        <taxon>asterids</taxon>
        <taxon>lamiids</taxon>
        <taxon>Lamiales</taxon>
        <taxon>Linderniaceae</taxon>
        <taxon>Craterostigma</taxon>
    </lineage>
</organism>
<evidence type="ECO:0000250" key="1"/>
<evidence type="ECO:0000305" key="2"/>
<reference key="1">
    <citation type="journal article" date="1995" name="EMBO J.">
        <title>The transketolase gene family of the resurrection plant Craterostigma plantagineum: differential expression during the rehydration phase.</title>
        <authorList>
            <person name="Bernacchia G."/>
            <person name="Schwall G."/>
            <person name="Lottspeich F."/>
            <person name="Salamini F."/>
            <person name="Bartels D."/>
        </authorList>
    </citation>
    <scope>NUCLEOTIDE SEQUENCE [MRNA]</scope>
    <scope>PARTIAL PROTEIN SEQUENCE</scope>
</reference>
<accession>Q42676</accession>